<keyword id="KW-0224">Dipeptidase</keyword>
<keyword id="KW-1015">Disulfide bond</keyword>
<keyword id="KW-0325">Glycoprotein</keyword>
<keyword id="KW-0378">Hydrolase</keyword>
<keyword id="KW-0479">Metal-binding</keyword>
<keyword id="KW-0482">Metalloprotease</keyword>
<keyword id="KW-0645">Protease</keyword>
<keyword id="KW-0732">Signal</keyword>
<keyword id="KW-0862">Zinc</keyword>
<feature type="signal peptide" evidence="2">
    <location>
        <begin position="1"/>
        <end position="20"/>
    </location>
</feature>
<feature type="chain" id="PRO_0000411215" description="Putative dipeptidase TRV_05564">
    <location>
        <begin position="21"/>
        <end position="414"/>
    </location>
</feature>
<feature type="binding site" evidence="3">
    <location>
        <position position="45"/>
    </location>
    <ligand>
        <name>Zn(2+)</name>
        <dbReference type="ChEBI" id="CHEBI:29105"/>
        <label>1</label>
        <note>catalytic</note>
    </ligand>
</feature>
<feature type="binding site" evidence="3">
    <location>
        <position position="47"/>
    </location>
    <ligand>
        <name>Zn(2+)</name>
        <dbReference type="ChEBI" id="CHEBI:29105"/>
        <label>1</label>
        <note>catalytic</note>
    </ligand>
</feature>
<feature type="binding site" evidence="3">
    <location>
        <position position="157"/>
    </location>
    <ligand>
        <name>Zn(2+)</name>
        <dbReference type="ChEBI" id="CHEBI:29105"/>
        <label>1</label>
        <note>catalytic</note>
    </ligand>
</feature>
<feature type="binding site" evidence="3">
    <location>
        <position position="157"/>
    </location>
    <ligand>
        <name>Zn(2+)</name>
        <dbReference type="ChEBI" id="CHEBI:29105"/>
        <label>2</label>
        <note>catalytic</note>
    </ligand>
</feature>
<feature type="binding site" evidence="3">
    <location>
        <position position="184"/>
    </location>
    <ligand>
        <name>substrate</name>
    </ligand>
</feature>
<feature type="binding site" evidence="3">
    <location>
        <position position="228"/>
    </location>
    <ligand>
        <name>Zn(2+)</name>
        <dbReference type="ChEBI" id="CHEBI:29105"/>
        <label>2</label>
        <note>catalytic</note>
    </ligand>
</feature>
<feature type="binding site" evidence="3">
    <location>
        <position position="249"/>
    </location>
    <ligand>
        <name>Zn(2+)</name>
        <dbReference type="ChEBI" id="CHEBI:29105"/>
        <label>2</label>
        <note>catalytic</note>
    </ligand>
</feature>
<feature type="binding site" evidence="3">
    <location>
        <position position="260"/>
    </location>
    <ligand>
        <name>substrate</name>
    </ligand>
</feature>
<feature type="binding site" evidence="3">
    <location>
        <position position="320"/>
    </location>
    <ligand>
        <name>substrate</name>
    </ligand>
</feature>
<feature type="glycosylation site" description="N-linked (GlcNAc...) asparagine" evidence="2">
    <location>
        <position position="392"/>
    </location>
</feature>
<feature type="disulfide bond" evidence="3">
    <location>
        <begin position="96"/>
        <end position="186"/>
    </location>
</feature>
<protein>
    <recommendedName>
        <fullName>Putative dipeptidase TRV_05564</fullName>
        <ecNumber evidence="3">3.4.13.19</ecNumber>
    </recommendedName>
</protein>
<proteinExistence type="inferred from homology"/>
<evidence type="ECO:0000250" key="1"/>
<evidence type="ECO:0000255" key="2"/>
<evidence type="ECO:0000255" key="3">
    <source>
        <dbReference type="PROSITE-ProRule" id="PRU10073"/>
    </source>
</evidence>
<sequence length="414" mass="45407">MAALFVSLLALTSLVPVQGAATVPQTDYAKRAERVLKSAPLIDGHNDLLYAIRRSTNDQIYDGKLPFETSLKGHTDLPRMRKGRMGGQFWSVFIACPSDPNAPINTPKFATRDTLEQIDVARRLVDKYSKDLMYCDNPGCAKRAFREGKIGSFIGIEGGHQVGSSIAALRQAFYAGARYMTLTHNCDNAWATAASTVRAGKPDLGMTDFGPALIKEMNRLGMLVDLSHVSHQTMRDVLKITKAPVIFSHSSAYEVSKHLRNVPDDVLKTVAKNNGVVMVTFVSSFVKVDDPDSADVNTVVKHIFHIAEVAGWDHVGLGGDYDGTTELPKGLEDVSKYPYLIEKVLEAGATEEQARKLVGENVLRVWTEVEQIAKKIQRSGVLPVEEVWKGRNGTALSERSTFIEGPAPLEYGCD</sequence>
<dbReference type="EC" id="3.4.13.19" evidence="3"/>
<dbReference type="EMBL" id="ACYE01000298">
    <property type="protein sequence ID" value="EFE39721.1"/>
    <property type="molecule type" value="Genomic_DNA"/>
</dbReference>
<dbReference type="RefSeq" id="XP_003020339.1">
    <property type="nucleotide sequence ID" value="XM_003020293.1"/>
</dbReference>
<dbReference type="SMR" id="D4DEJ7"/>
<dbReference type="GeneID" id="9584076"/>
<dbReference type="KEGG" id="tve:TRV_05564"/>
<dbReference type="HOGENOM" id="CLU_031404_4_2_1"/>
<dbReference type="OrthoDB" id="2269at34384"/>
<dbReference type="Proteomes" id="UP000008383">
    <property type="component" value="Unassembled WGS sequence"/>
</dbReference>
<dbReference type="GO" id="GO:0046872">
    <property type="term" value="F:metal ion binding"/>
    <property type="evidence" value="ECO:0007669"/>
    <property type="project" value="UniProtKB-KW"/>
</dbReference>
<dbReference type="GO" id="GO:0070573">
    <property type="term" value="F:metallodipeptidase activity"/>
    <property type="evidence" value="ECO:0007669"/>
    <property type="project" value="InterPro"/>
</dbReference>
<dbReference type="GO" id="GO:0006508">
    <property type="term" value="P:proteolysis"/>
    <property type="evidence" value="ECO:0007669"/>
    <property type="project" value="UniProtKB-KW"/>
</dbReference>
<dbReference type="CDD" id="cd01301">
    <property type="entry name" value="rDP_like"/>
    <property type="match status" value="1"/>
</dbReference>
<dbReference type="Gene3D" id="3.20.20.140">
    <property type="entry name" value="Metal-dependent hydrolases"/>
    <property type="match status" value="1"/>
</dbReference>
<dbReference type="InterPro" id="IPR032466">
    <property type="entry name" value="Metal_Hydrolase"/>
</dbReference>
<dbReference type="InterPro" id="IPR008257">
    <property type="entry name" value="Pept_M19"/>
</dbReference>
<dbReference type="PANTHER" id="PTHR10443:SF12">
    <property type="entry name" value="DIPEPTIDASE"/>
    <property type="match status" value="1"/>
</dbReference>
<dbReference type="PANTHER" id="PTHR10443">
    <property type="entry name" value="MICROSOMAL DIPEPTIDASE"/>
    <property type="match status" value="1"/>
</dbReference>
<dbReference type="Pfam" id="PF01244">
    <property type="entry name" value="Peptidase_M19"/>
    <property type="match status" value="1"/>
</dbReference>
<dbReference type="SUPFAM" id="SSF51556">
    <property type="entry name" value="Metallo-dependent hydrolases"/>
    <property type="match status" value="1"/>
</dbReference>
<dbReference type="PROSITE" id="PS51365">
    <property type="entry name" value="RENAL_DIPEPTIDASE_2"/>
    <property type="match status" value="1"/>
</dbReference>
<organism>
    <name type="scientific">Trichophyton verrucosum (strain HKI 0517)</name>
    <dbReference type="NCBI Taxonomy" id="663202"/>
    <lineage>
        <taxon>Eukaryota</taxon>
        <taxon>Fungi</taxon>
        <taxon>Dikarya</taxon>
        <taxon>Ascomycota</taxon>
        <taxon>Pezizomycotina</taxon>
        <taxon>Eurotiomycetes</taxon>
        <taxon>Eurotiomycetidae</taxon>
        <taxon>Onygenales</taxon>
        <taxon>Arthrodermataceae</taxon>
        <taxon>Trichophyton</taxon>
    </lineage>
</organism>
<reference key="1">
    <citation type="journal article" date="2011" name="Genome Biol.">
        <title>Comparative and functional genomics provide insights into the pathogenicity of dermatophytic fungi.</title>
        <authorList>
            <person name="Burmester A."/>
            <person name="Shelest E."/>
            <person name="Gloeckner G."/>
            <person name="Heddergott C."/>
            <person name="Schindler S."/>
            <person name="Staib P."/>
            <person name="Heidel A."/>
            <person name="Felder M."/>
            <person name="Petzold A."/>
            <person name="Szafranski K."/>
            <person name="Feuermann M."/>
            <person name="Pedruzzi I."/>
            <person name="Priebe S."/>
            <person name="Groth M."/>
            <person name="Winkler R."/>
            <person name="Li W."/>
            <person name="Kniemeyer O."/>
            <person name="Schroeckh V."/>
            <person name="Hertweck C."/>
            <person name="Hube B."/>
            <person name="White T.C."/>
            <person name="Platzer M."/>
            <person name="Guthke R."/>
            <person name="Heitman J."/>
            <person name="Woestemeyer J."/>
            <person name="Zipfel P.F."/>
            <person name="Monod M."/>
            <person name="Brakhage A.A."/>
        </authorList>
    </citation>
    <scope>NUCLEOTIDE SEQUENCE [LARGE SCALE GENOMIC DNA]</scope>
    <source>
        <strain>HKI 0517</strain>
    </source>
</reference>
<accession>D4DEJ7</accession>
<comment type="function">
    <text evidence="1">Hydrolyzes a wide range of dipeptides.</text>
</comment>
<comment type="catalytic activity">
    <reaction evidence="3">
        <text>an L-aminoacyl-L-amino acid + H2O = 2 an L-alpha-amino acid</text>
        <dbReference type="Rhea" id="RHEA:48940"/>
        <dbReference type="ChEBI" id="CHEBI:15377"/>
        <dbReference type="ChEBI" id="CHEBI:59869"/>
        <dbReference type="ChEBI" id="CHEBI:77460"/>
        <dbReference type="EC" id="3.4.13.19"/>
    </reaction>
</comment>
<comment type="cofactor">
    <cofactor evidence="3">
        <name>Zn(2+)</name>
        <dbReference type="ChEBI" id="CHEBI:29105"/>
    </cofactor>
</comment>
<comment type="similarity">
    <text evidence="3">Belongs to the metallo-dependent hydrolases superfamily. Peptidase M19 family.</text>
</comment>
<name>DPEP1_TRIVH</name>
<gene>
    <name type="ORF">TRV_05564</name>
</gene>